<protein>
    <recommendedName>
        <fullName>Uncharacterized protein ycf20</fullName>
    </recommendedName>
</protein>
<gene>
    <name type="primary">ycf20</name>
</gene>
<proteinExistence type="inferred from homology"/>
<accession>P51214</accession>
<evidence type="ECO:0000305" key="1"/>
<sequence length="108" mass="11875">MIRTKLSIFFSYFVQNLSSRLYYSLNELTAGLISLLLGFFISTGLSTIPGQTGDWGIIAASLIVAAIELVSKIVYSNKKKYGVRINLLNNLKIGITYGLFVDAFKLGS</sequence>
<comment type="subcellular location">
    <subcellularLocation>
        <location>Plastid</location>
        <location>Chloroplast</location>
    </subcellularLocation>
</comment>
<comment type="similarity">
    <text evidence="1">Belongs to the ycf20 family.</text>
</comment>
<keyword id="KW-0150">Chloroplast</keyword>
<keyword id="KW-0934">Plastid</keyword>
<feature type="chain" id="PRO_0000217328" description="Uncharacterized protein ycf20">
    <location>
        <begin position="1"/>
        <end position="108"/>
    </location>
</feature>
<dbReference type="EMBL" id="U38804">
    <property type="protein sequence ID" value="AAC08100.1"/>
    <property type="molecule type" value="Genomic_DNA"/>
</dbReference>
<dbReference type="PIR" id="S73135">
    <property type="entry name" value="S73135"/>
</dbReference>
<dbReference type="RefSeq" id="NP_053824.1">
    <property type="nucleotide sequence ID" value="NC_000925.1"/>
</dbReference>
<dbReference type="GeneID" id="809838"/>
<dbReference type="GO" id="GO:0009507">
    <property type="term" value="C:chloroplast"/>
    <property type="evidence" value="ECO:0007669"/>
    <property type="project" value="UniProtKB-SubCell"/>
</dbReference>
<dbReference type="InterPro" id="IPR007572">
    <property type="entry name" value="Uncharacterised_Ycf20"/>
</dbReference>
<dbReference type="PANTHER" id="PTHR33787">
    <property type="match status" value="1"/>
</dbReference>
<dbReference type="PANTHER" id="PTHR33787:SF4">
    <property type="entry name" value="YCF20-LIKE PROTEIN"/>
    <property type="match status" value="1"/>
</dbReference>
<dbReference type="Pfam" id="PF04483">
    <property type="entry name" value="DUF565"/>
    <property type="match status" value="1"/>
</dbReference>
<organism>
    <name type="scientific">Porphyra purpurea</name>
    <name type="common">Red seaweed</name>
    <name type="synonym">Ulva purpurea</name>
    <dbReference type="NCBI Taxonomy" id="2787"/>
    <lineage>
        <taxon>Eukaryota</taxon>
        <taxon>Rhodophyta</taxon>
        <taxon>Bangiophyceae</taxon>
        <taxon>Bangiales</taxon>
        <taxon>Bangiaceae</taxon>
        <taxon>Porphyra</taxon>
    </lineage>
</organism>
<geneLocation type="chloroplast"/>
<name>YCF20_PORPU</name>
<reference key="1">
    <citation type="journal article" date="1995" name="Plant Mol. Biol. Rep.">
        <title>Complete nucleotide sequence of the Porphyra purpurea chloroplast genome.</title>
        <authorList>
            <person name="Reith M.E."/>
            <person name="Munholland J."/>
        </authorList>
    </citation>
    <scope>NUCLEOTIDE SEQUENCE [LARGE SCALE GENOMIC DNA]</scope>
    <source>
        <strain>Avonport</strain>
    </source>
</reference>